<sequence>MKMEEMDLEEDVLDVVDQEASTIVDILCEQRDNVLQRIFALVDARTREQLQHLPNNRESISGLVDYFRTSDQHTCRRFLDIIWSFCENIPLELDIRIVNLAGSTAGALVNNSHVPDTENSPQSRYGKRARLDQVQSYTNAVKSFLQKKFEKVTKDIKKEVCLNNTWLCWRTQKYARVRDRPAKSQEGEEVSLEHKESVEALLMKTGRVVMLSGQAGSGKTLLMHCLAHHWAQGSYPSIELLFLLEFRQLNLISQPLSLKELLFRFFLPSDEDDEQSEAVLNYVLSNPEKICFIFDGYDEFGARFKDPKELECSVNPYQQLPLADLLSALCSAKILPGCTVLVTCRPRDVFDLFGSSDYFVAELLGFNQQRVKEYTQEYFQEKGCEIKERAVSLLMDSHHLLSMSHVPGLCHVCCVCLDHFLTSDMSQQPGTQLPTSLTQIYLHILSAFISRCHGCGSSDNHTPLLQRYRVQIAMLSKLAMDGLENSRIVFPANELTTELMNFGANAGILSRLDLTCGDGSRRLGCAFTHLTIQEFMAALHLMTNPDITESQLKKKLNLKSRWTAKTDPKTVFTDSLHLYMCGLAAEACTSNLVLLKGSENARAIVLKRQDAVLKTLQRFVVSGRQTGPKIIELCRCAHETQNIDLARAIGPRDRFELRNIRLNPVDIDALAFVISSANQMVCLDFGACYIEPECLNIIPNCKNLEELNFRSRKYDDKFAEALSGILPKLQSLKQLHFISGGLTNIGAAKLFKASECCPQITRLNVSDNYLTDESVKKITELFPKLAKLTSVILGKNNISINGIFILAGKMAAFPNIKEVYANAKKKEINVQFSANTTNSASTDDLNNTEESKQLILNDWNLKWTNVHNLCPMLRGCSSLTVLNLSHNALGNRGLKKLLEHLPTLDTIQEINVSDNGVDMDGVVLLSPLLCTLKDLTEVEASHNGKKMLVLTFSSSIIDALKQVTSEGCDILHKKLSLTHSDIHPTDMNKLCKNLIKCPNPLNLDFSHGTLKDESTEKLLKFLPNMASLNLLNLSHIQMSTDSALLLVQLLSDCQRTTTVELRQLGETFIKFLQDKSEAATCKFNQYRLSSANLAKLCEILEHCHHLTDLDLSSNFLKDEDVKTFVQFLPKLQISGSVSLNNNNLTEVGVLYLLSLMHTCERVAAVEVSLGKEEQQDIIGFVQKNCTGKTFRLSSCTVQSQNVLFLLNKLATLNSVQTLELRNNSFSADTIKYLITEFCGDCNHRTIRIMEPWIKGEAAVGLVQCCLELNPNIKEIRVEKTCLKLSVESLVSATIPNEWENGNCSLSAVHCISFDDCEVEGQHLSSLQSALRNCPSLQELHFSQLTMGADGAEFLSSVLPSLKNLKILSLSSKGETEDEAVIFALQHAQKHLEQLSLAHHVIKDRGAAVLGNALQGFTRMRSLSLLKCLDWTATGGRDLVRGLVQCHSLEEIRLDSIELDEESIDCFAQGLQAMTSLKKISLNKTISKEGSGVLCLLASLHPLIELEEIELIGLRMGDRGVEELVKHIPKWTRLRKINLSENRVSDHAGEMLVKALSHCRALQQIHLFRNNLGHSSAAVLGQVLPSLSELTELDLSENQMESKGCSSVCEALVSMKALKKLHLTSIGTSDLVNVASCLKHCTSIEDISLSWNNCENDVVLKLAEVLPQCSKLKRLDLEANNINTSGAMALATCLQFCPWIEVIRLWRNPIKKDDLILKDKRLNFSST</sequence>
<organism>
    <name type="scientific">Ictalurus punctatus</name>
    <name type="common">Channel catfish</name>
    <name type="synonym">Silurus punctatus</name>
    <dbReference type="NCBI Taxonomy" id="7998"/>
    <lineage>
        <taxon>Eukaryota</taxon>
        <taxon>Metazoa</taxon>
        <taxon>Chordata</taxon>
        <taxon>Craniata</taxon>
        <taxon>Vertebrata</taxon>
        <taxon>Euteleostomi</taxon>
        <taxon>Actinopterygii</taxon>
        <taxon>Neopterygii</taxon>
        <taxon>Teleostei</taxon>
        <taxon>Ostariophysi</taxon>
        <taxon>Siluriformes</taxon>
        <taxon>Ictaluridae</taxon>
        <taxon>Ictalurus</taxon>
    </lineage>
</organism>
<evidence type="ECO:0000250" key="1"/>
<evidence type="ECO:0000255" key="2">
    <source>
        <dbReference type="PROSITE-ProRule" id="PRU00136"/>
    </source>
</evidence>
<evidence type="ECO:0000305" key="3"/>
<protein>
    <recommendedName>
        <fullName>Protein NLRC5</fullName>
    </recommendedName>
</protein>
<proteinExistence type="evidence at transcript level"/>
<accession>C6FG12</accession>
<comment type="function">
    <text evidence="1">Probable regulator of the NF-kappa-B and type I interferon signaling pathways. May also regulate the type II interferon signaling pathway. Plays a role in homeostatic control of innate immunity and in antiviral defense mechanisms (By similarity).</text>
</comment>
<comment type="subcellular location">
    <subcellularLocation>
        <location evidence="1">Cytoplasm</location>
    </subcellularLocation>
</comment>
<comment type="similarity">
    <text evidence="3">Belongs to the NLRP family.</text>
</comment>
<comment type="caution">
    <text evidence="3">Supposed to contain a CARD domain at the N-terminus. However, this domain is not detected by Pfam, PROSITE or SMART. Has a weak similarity with a DAPIN domain.</text>
</comment>
<keyword id="KW-0067">ATP-binding</keyword>
<keyword id="KW-0963">Cytoplasm</keyword>
<keyword id="KW-0391">Immunity</keyword>
<keyword id="KW-0399">Innate immunity</keyword>
<keyword id="KW-0433">Leucine-rich repeat</keyword>
<keyword id="KW-0547">Nucleotide-binding</keyword>
<keyword id="KW-0677">Repeat</keyword>
<reference key="1">
    <citation type="journal article" date="2009" name="Dev. Comp. Immunol.">
        <title>NOD-like subfamily of the nucleotide-binding domain and leucine-rich repeat containing family receptors and their expression in channel catfish.</title>
        <authorList>
            <person name="Sha Z."/>
            <person name="Abernathy J.W."/>
            <person name="Wang S."/>
            <person name="Li P."/>
            <person name="Kucuktas H."/>
            <person name="Liu H."/>
            <person name="Peatman E."/>
            <person name="Liu Z."/>
        </authorList>
    </citation>
    <scope>NUCLEOTIDE SEQUENCE [MRNA]</scope>
    <scope>TISSUE SPECIFICITY</scope>
</reference>
<name>NLRC5_ICTPU</name>
<dbReference type="EMBL" id="FJ004847">
    <property type="protein sequence ID" value="ACM45227.1"/>
    <property type="molecule type" value="mRNA"/>
</dbReference>
<dbReference type="RefSeq" id="NP_001186995.1">
    <property type="nucleotide sequence ID" value="NM_001200066.1"/>
</dbReference>
<dbReference type="SMR" id="C6FG12"/>
<dbReference type="STRING" id="7998.ENSIPUP00000029542"/>
<dbReference type="GeneID" id="100303710"/>
<dbReference type="KEGG" id="ipu:100303710"/>
<dbReference type="CTD" id="84166"/>
<dbReference type="OrthoDB" id="120976at2759"/>
<dbReference type="Proteomes" id="UP000221080">
    <property type="component" value="Chromosome 4"/>
</dbReference>
<dbReference type="GO" id="GO:0005737">
    <property type="term" value="C:cytoplasm"/>
    <property type="evidence" value="ECO:0007669"/>
    <property type="project" value="UniProtKB-SubCell"/>
</dbReference>
<dbReference type="GO" id="GO:0005524">
    <property type="term" value="F:ATP binding"/>
    <property type="evidence" value="ECO:0007669"/>
    <property type="project" value="UniProtKB-KW"/>
</dbReference>
<dbReference type="GO" id="GO:0045087">
    <property type="term" value="P:innate immune response"/>
    <property type="evidence" value="ECO:0007669"/>
    <property type="project" value="UniProtKB-KW"/>
</dbReference>
<dbReference type="GO" id="GO:0045345">
    <property type="term" value="P:positive regulation of MHC class I biosynthetic process"/>
    <property type="evidence" value="ECO:0007669"/>
    <property type="project" value="TreeGrafter"/>
</dbReference>
<dbReference type="GO" id="GO:0045348">
    <property type="term" value="P:positive regulation of MHC class II biosynthetic process"/>
    <property type="evidence" value="ECO:0007669"/>
    <property type="project" value="TreeGrafter"/>
</dbReference>
<dbReference type="GO" id="GO:0045944">
    <property type="term" value="P:positive regulation of transcription by RNA polymerase II"/>
    <property type="evidence" value="ECO:0007669"/>
    <property type="project" value="TreeGrafter"/>
</dbReference>
<dbReference type="Gene3D" id="1.10.533.20">
    <property type="match status" value="1"/>
</dbReference>
<dbReference type="Gene3D" id="3.40.50.300">
    <property type="entry name" value="P-loop containing nucleotide triphosphate hydrolases"/>
    <property type="match status" value="1"/>
</dbReference>
<dbReference type="Gene3D" id="3.80.10.10">
    <property type="entry name" value="Ribonuclease Inhibitor"/>
    <property type="match status" value="8"/>
</dbReference>
<dbReference type="InterPro" id="IPR001611">
    <property type="entry name" value="Leu-rich_rpt"/>
</dbReference>
<dbReference type="InterPro" id="IPR006553">
    <property type="entry name" value="Leu-rich_rpt_Cys-con_subtyp"/>
</dbReference>
<dbReference type="InterPro" id="IPR032675">
    <property type="entry name" value="LRR_dom_sf"/>
</dbReference>
<dbReference type="InterPro" id="IPR007111">
    <property type="entry name" value="NACHT_NTPase"/>
</dbReference>
<dbReference type="InterPro" id="IPR041267">
    <property type="entry name" value="NLRP_HD2"/>
</dbReference>
<dbReference type="InterPro" id="IPR027417">
    <property type="entry name" value="P-loop_NTPase"/>
</dbReference>
<dbReference type="PANTHER" id="PTHR47189">
    <property type="entry name" value="MHC CLASS II TRANSACTIVATOR"/>
    <property type="match status" value="1"/>
</dbReference>
<dbReference type="PANTHER" id="PTHR47189:SF1">
    <property type="entry name" value="MHC CLASS II TRANSACTIVATOR"/>
    <property type="match status" value="1"/>
</dbReference>
<dbReference type="Pfam" id="PF13516">
    <property type="entry name" value="LRR_6"/>
    <property type="match status" value="4"/>
</dbReference>
<dbReference type="Pfam" id="PF05729">
    <property type="entry name" value="NACHT"/>
    <property type="match status" value="1"/>
</dbReference>
<dbReference type="Pfam" id="PF17776">
    <property type="entry name" value="NLRC4_HD2"/>
    <property type="match status" value="1"/>
</dbReference>
<dbReference type="SMART" id="SM00367">
    <property type="entry name" value="LRR_CC"/>
    <property type="match status" value="6"/>
</dbReference>
<dbReference type="SMART" id="SM00368">
    <property type="entry name" value="LRR_RI"/>
    <property type="match status" value="11"/>
</dbReference>
<dbReference type="SUPFAM" id="SSF52540">
    <property type="entry name" value="P-loop containing nucleoside triphosphate hydrolases"/>
    <property type="match status" value="1"/>
</dbReference>
<dbReference type="SUPFAM" id="SSF52047">
    <property type="entry name" value="RNI-like"/>
    <property type="match status" value="4"/>
</dbReference>
<dbReference type="PROSITE" id="PS50837">
    <property type="entry name" value="NACHT"/>
    <property type="match status" value="1"/>
</dbReference>
<feature type="chain" id="PRO_0000397876" description="Protein NLRC5">
    <location>
        <begin position="1"/>
        <end position="1726"/>
    </location>
</feature>
<feature type="domain" description="NACHT" evidence="2">
    <location>
        <begin position="207"/>
        <end position="537"/>
    </location>
</feature>
<feature type="repeat" description="LRR 1">
    <location>
        <begin position="879"/>
        <end position="902"/>
    </location>
</feature>
<feature type="repeat" description="LRR 2">
    <location>
        <begin position="904"/>
        <end position="925"/>
    </location>
</feature>
<feature type="repeat" description="LRR 3">
    <location>
        <begin position="1002"/>
        <end position="1025"/>
    </location>
</feature>
<feature type="repeat" description="LRR 4">
    <location>
        <begin position="1026"/>
        <end position="1048"/>
    </location>
</feature>
<feature type="repeat" description="LRR 5">
    <location>
        <begin position="1103"/>
        <end position="1126"/>
    </location>
</feature>
<feature type="repeat" description="LRR 6">
    <location>
        <begin position="1128"/>
        <end position="1155"/>
    </location>
</feature>
<feature type="repeat" description="LRR 7">
    <location>
        <begin position="1212"/>
        <end position="1235"/>
    </location>
</feature>
<feature type="repeat" description="LRR 8">
    <location>
        <begin position="1351"/>
        <end position="1374"/>
    </location>
</feature>
<feature type="repeat" description="LRR 9">
    <location>
        <begin position="1387"/>
        <end position="1411"/>
    </location>
</feature>
<feature type="repeat" description="LRR 10">
    <location>
        <begin position="1421"/>
        <end position="1443"/>
    </location>
</feature>
<feature type="repeat" description="LRR 11">
    <location>
        <begin position="1447"/>
        <end position="1468"/>
    </location>
</feature>
<feature type="repeat" description="LRR 12">
    <location>
        <begin position="1502"/>
        <end position="1525"/>
    </location>
</feature>
<feature type="repeat" description="LRR 13">
    <location>
        <begin position="1532"/>
        <end position="1553"/>
    </location>
</feature>
<feature type="repeat" description="LRR 14">
    <location>
        <begin position="1560"/>
        <end position="1580"/>
    </location>
</feature>
<feature type="repeat" description="LRR 15">
    <location>
        <begin position="1588"/>
        <end position="1609"/>
    </location>
</feature>
<feature type="repeat" description="LRR 16">
    <location>
        <begin position="1616"/>
        <end position="1637"/>
    </location>
</feature>
<feature type="repeat" description="LRR 17">
    <location>
        <begin position="1642"/>
        <end position="1662"/>
    </location>
</feature>
<feature type="repeat" description="LRR 18">
    <location>
        <begin position="1670"/>
        <end position="1691"/>
    </location>
</feature>
<feature type="binding site" evidence="2">
    <location>
        <begin position="213"/>
        <end position="220"/>
    </location>
    <ligand>
        <name>ATP</name>
        <dbReference type="ChEBI" id="CHEBI:30616"/>
    </ligand>
</feature>
<gene>
    <name type="primary">nlrc5</name>
</gene>